<dbReference type="EC" id="1.14.-.-" evidence="1"/>
<dbReference type="EMBL" id="CP000759">
    <property type="protein sequence ID" value="ABS16955.1"/>
    <property type="molecule type" value="Genomic_DNA"/>
</dbReference>
<dbReference type="RefSeq" id="WP_012093546.1">
    <property type="nucleotide sequence ID" value="NC_009668.1"/>
</dbReference>
<dbReference type="SMR" id="A6X6V1"/>
<dbReference type="STRING" id="439375.Oant_4255"/>
<dbReference type="KEGG" id="oan:Oant_4255"/>
<dbReference type="PATRIC" id="fig|439375.7.peg.4428"/>
<dbReference type="eggNOG" id="COG1054">
    <property type="taxonomic scope" value="Bacteria"/>
</dbReference>
<dbReference type="HOGENOM" id="CLU_038878_0_0_5"/>
<dbReference type="PhylomeDB" id="A6X6V1"/>
<dbReference type="Proteomes" id="UP000002301">
    <property type="component" value="Chromosome 2"/>
</dbReference>
<dbReference type="GO" id="GO:0016705">
    <property type="term" value="F:oxidoreductase activity, acting on paired donors, with incorporation or reduction of molecular oxygen"/>
    <property type="evidence" value="ECO:0007669"/>
    <property type="project" value="UniProtKB-UniRule"/>
</dbReference>
<dbReference type="GO" id="GO:0006400">
    <property type="term" value="P:tRNA modification"/>
    <property type="evidence" value="ECO:0007669"/>
    <property type="project" value="UniProtKB-UniRule"/>
</dbReference>
<dbReference type="CDD" id="cd01518">
    <property type="entry name" value="RHOD_YceA"/>
    <property type="match status" value="1"/>
</dbReference>
<dbReference type="Gene3D" id="3.30.70.100">
    <property type="match status" value="1"/>
</dbReference>
<dbReference type="Gene3D" id="3.40.250.10">
    <property type="entry name" value="Rhodanese-like domain"/>
    <property type="match status" value="1"/>
</dbReference>
<dbReference type="HAMAP" id="MF_00469">
    <property type="entry name" value="TrhO"/>
    <property type="match status" value="1"/>
</dbReference>
<dbReference type="InterPro" id="IPR036280">
    <property type="entry name" value="Multihaem_cyt_sf"/>
</dbReference>
<dbReference type="InterPro" id="IPR001763">
    <property type="entry name" value="Rhodanese-like_dom"/>
</dbReference>
<dbReference type="InterPro" id="IPR036873">
    <property type="entry name" value="Rhodanese-like_dom_sf"/>
</dbReference>
<dbReference type="InterPro" id="IPR020936">
    <property type="entry name" value="TrhO"/>
</dbReference>
<dbReference type="InterPro" id="IPR040503">
    <property type="entry name" value="TRHO_N"/>
</dbReference>
<dbReference type="NCBIfam" id="NF001136">
    <property type="entry name" value="PRK00142.1-4"/>
    <property type="match status" value="1"/>
</dbReference>
<dbReference type="PANTHER" id="PTHR43268:SF3">
    <property type="entry name" value="RHODANESE-LIKE DOMAIN-CONTAINING PROTEIN 7-RELATED"/>
    <property type="match status" value="1"/>
</dbReference>
<dbReference type="PANTHER" id="PTHR43268">
    <property type="entry name" value="THIOSULFATE SULFURTRANSFERASE/RHODANESE-LIKE DOMAIN-CONTAINING PROTEIN 2"/>
    <property type="match status" value="1"/>
</dbReference>
<dbReference type="Pfam" id="PF00581">
    <property type="entry name" value="Rhodanese"/>
    <property type="match status" value="1"/>
</dbReference>
<dbReference type="Pfam" id="PF17773">
    <property type="entry name" value="UPF0176_N"/>
    <property type="match status" value="1"/>
</dbReference>
<dbReference type="SMART" id="SM00450">
    <property type="entry name" value="RHOD"/>
    <property type="match status" value="1"/>
</dbReference>
<dbReference type="SUPFAM" id="SSF48695">
    <property type="entry name" value="Multiheme cytochromes"/>
    <property type="match status" value="1"/>
</dbReference>
<dbReference type="SUPFAM" id="SSF52821">
    <property type="entry name" value="Rhodanese/Cell cycle control phosphatase"/>
    <property type="match status" value="1"/>
</dbReference>
<dbReference type="PROSITE" id="PS50206">
    <property type="entry name" value="RHODANESE_3"/>
    <property type="match status" value="1"/>
</dbReference>
<sequence length="305" mass="34013">MSNLPFTVAALYCFAPLPQYESLREPLAKLCCSNGIKGTLLLAAEGINGTVAGTPQAIEKLVQHITAIPGLADPELKYSHATEMPFHRMKVRLKREIVTMGVDGIDPLKSVGTYIAPQDWNALIADENTVVVDTRNDYEYAIGTFEGALDPQTKTFREFPEWVEQNRDKLEGKKIAMFCTGGIRCEKATAFVKGLGFDDVFHLKGGILKYLEEVPREDSMWNGECFVFDERVAVGHGLAESDVELCRACRRPISPEDKLSQFFEEGVSCAGCYDERTPEDRARYAERQKQVKLAEMRGAHKHIGS</sequence>
<gene>
    <name evidence="1" type="primary">trhO</name>
    <name type="ordered locus">Oant_4255</name>
</gene>
<reference key="1">
    <citation type="journal article" date="2011" name="J. Bacteriol.">
        <title>Genome of Ochrobactrum anthropi ATCC 49188 T, a versatile opportunistic pathogen and symbiont of several eukaryotic hosts.</title>
        <authorList>
            <person name="Chain P.S."/>
            <person name="Lang D.M."/>
            <person name="Comerci D.J."/>
            <person name="Malfatti S.A."/>
            <person name="Vergez L.M."/>
            <person name="Shin M."/>
            <person name="Ugalde R.A."/>
            <person name="Garcia E."/>
            <person name="Tolmasky M.E."/>
        </authorList>
    </citation>
    <scope>NUCLEOTIDE SEQUENCE [LARGE SCALE GENOMIC DNA]</scope>
    <source>
        <strain>ATCC 49188 / DSM 6882 / CCUG 24695 / JCM 21032 / LMG 3331 / NBRC 15819 / NCTC 12168 / Alc 37</strain>
    </source>
</reference>
<evidence type="ECO:0000255" key="1">
    <source>
        <dbReference type="HAMAP-Rule" id="MF_00469"/>
    </source>
</evidence>
<comment type="function">
    <text evidence="1">Catalyzes oxygen-dependent 5-hydroxyuridine (ho5U) modification at position 34 in tRNAs.</text>
</comment>
<comment type="catalytic activity">
    <reaction evidence="1">
        <text>uridine(34) in tRNA + AH2 + O2 = 5-hydroxyuridine(34) in tRNA + A + H2O</text>
        <dbReference type="Rhea" id="RHEA:64224"/>
        <dbReference type="Rhea" id="RHEA-COMP:11727"/>
        <dbReference type="Rhea" id="RHEA-COMP:13381"/>
        <dbReference type="ChEBI" id="CHEBI:13193"/>
        <dbReference type="ChEBI" id="CHEBI:15377"/>
        <dbReference type="ChEBI" id="CHEBI:15379"/>
        <dbReference type="ChEBI" id="CHEBI:17499"/>
        <dbReference type="ChEBI" id="CHEBI:65315"/>
        <dbReference type="ChEBI" id="CHEBI:136877"/>
    </reaction>
</comment>
<comment type="similarity">
    <text evidence="1">Belongs to the TrhO family.</text>
</comment>
<accession>A6X6V1</accession>
<organism>
    <name type="scientific">Brucella anthropi (strain ATCC 49188 / DSM 6882 / CCUG 24695 / JCM 21032 / LMG 3331 / NBRC 15819 / NCTC 12168 / Alc 37)</name>
    <name type="common">Ochrobactrum anthropi</name>
    <dbReference type="NCBI Taxonomy" id="439375"/>
    <lineage>
        <taxon>Bacteria</taxon>
        <taxon>Pseudomonadati</taxon>
        <taxon>Pseudomonadota</taxon>
        <taxon>Alphaproteobacteria</taxon>
        <taxon>Hyphomicrobiales</taxon>
        <taxon>Brucellaceae</taxon>
        <taxon>Brucella/Ochrobactrum group</taxon>
        <taxon>Brucella</taxon>
    </lineage>
</organism>
<name>TRHO_BRUA4</name>
<feature type="chain" id="PRO_1000060368" description="tRNA uridine(34) hydroxylase">
    <location>
        <begin position="1"/>
        <end position="305"/>
    </location>
</feature>
<feature type="domain" description="Rhodanese" evidence="1">
    <location>
        <begin position="125"/>
        <end position="219"/>
    </location>
</feature>
<feature type="active site" description="Cysteine persulfide intermediate" evidence="1">
    <location>
        <position position="179"/>
    </location>
</feature>
<protein>
    <recommendedName>
        <fullName evidence="1">tRNA uridine(34) hydroxylase</fullName>
        <ecNumber evidence="1">1.14.-.-</ecNumber>
    </recommendedName>
    <alternativeName>
        <fullName evidence="1">tRNA hydroxylation protein O</fullName>
    </alternativeName>
</protein>
<proteinExistence type="inferred from homology"/>
<keyword id="KW-0560">Oxidoreductase</keyword>
<keyword id="KW-1185">Reference proteome</keyword>
<keyword id="KW-0819">tRNA processing</keyword>